<proteinExistence type="predicted"/>
<gene>
    <name type="primary">yaeR</name>
    <name type="ordered locus">b0187</name>
    <name type="ordered locus">JW0182</name>
</gene>
<organism>
    <name type="scientific">Escherichia coli (strain K12)</name>
    <dbReference type="NCBI Taxonomy" id="83333"/>
    <lineage>
        <taxon>Bacteria</taxon>
        <taxon>Pseudomonadati</taxon>
        <taxon>Pseudomonadota</taxon>
        <taxon>Gammaproteobacteria</taxon>
        <taxon>Enterobacterales</taxon>
        <taxon>Enterobacteriaceae</taxon>
        <taxon>Escherichia</taxon>
    </lineage>
</organism>
<dbReference type="EMBL" id="D49445">
    <property type="protein sequence ID" value="BAA08427.1"/>
    <property type="molecule type" value="Genomic_DNA"/>
</dbReference>
<dbReference type="EMBL" id="Z50870">
    <property type="protein sequence ID" value="CAA90750.1"/>
    <property type="molecule type" value="Genomic_DNA"/>
</dbReference>
<dbReference type="EMBL" id="U70214">
    <property type="protein sequence ID" value="AAB08616.1"/>
    <property type="molecule type" value="Genomic_DNA"/>
</dbReference>
<dbReference type="EMBL" id="U00096">
    <property type="protein sequence ID" value="AAC73298.2"/>
    <property type="molecule type" value="Genomic_DNA"/>
</dbReference>
<dbReference type="EMBL" id="AP009048">
    <property type="protein sequence ID" value="BAA77862.1"/>
    <property type="molecule type" value="Genomic_DNA"/>
</dbReference>
<dbReference type="PIR" id="C64743">
    <property type="entry name" value="C64743"/>
</dbReference>
<dbReference type="RefSeq" id="NP_414729.4">
    <property type="nucleotide sequence ID" value="NC_000913.3"/>
</dbReference>
<dbReference type="RefSeq" id="WP_000901099.1">
    <property type="nucleotide sequence ID" value="NZ_SSZK01000004.1"/>
</dbReference>
<dbReference type="SMR" id="P52096"/>
<dbReference type="BioGRID" id="4261366">
    <property type="interactions" value="16"/>
</dbReference>
<dbReference type="DIP" id="DIP-11206N"/>
<dbReference type="FunCoup" id="P52096">
    <property type="interactions" value="172"/>
</dbReference>
<dbReference type="IntAct" id="P52096">
    <property type="interactions" value="2"/>
</dbReference>
<dbReference type="STRING" id="511145.b0187"/>
<dbReference type="jPOST" id="P52096"/>
<dbReference type="PaxDb" id="511145-b0187"/>
<dbReference type="EnsemblBacteria" id="AAC73298">
    <property type="protein sequence ID" value="AAC73298"/>
    <property type="gene ID" value="b0187"/>
</dbReference>
<dbReference type="GeneID" id="944875"/>
<dbReference type="KEGG" id="ecj:JW0182"/>
<dbReference type="KEGG" id="eco:b0187"/>
<dbReference type="KEGG" id="ecoc:C3026_00860"/>
<dbReference type="PATRIC" id="fig|1411691.4.peg.2092"/>
<dbReference type="EchoBASE" id="EB3015"/>
<dbReference type="eggNOG" id="COG0346">
    <property type="taxonomic scope" value="Bacteria"/>
</dbReference>
<dbReference type="HOGENOM" id="CLU_046006_2_4_6"/>
<dbReference type="InParanoid" id="P52096"/>
<dbReference type="OMA" id="MNICRVH"/>
<dbReference type="OrthoDB" id="9795618at2"/>
<dbReference type="PhylomeDB" id="P52096"/>
<dbReference type="BioCyc" id="EcoCyc:G6095-MONOMER"/>
<dbReference type="PRO" id="PR:P52096"/>
<dbReference type="Proteomes" id="UP000000625">
    <property type="component" value="Chromosome"/>
</dbReference>
<dbReference type="GO" id="GO:0046872">
    <property type="term" value="F:metal ion binding"/>
    <property type="evidence" value="ECO:0007669"/>
    <property type="project" value="UniProtKB-KW"/>
</dbReference>
<dbReference type="CDD" id="cd08352">
    <property type="entry name" value="VOC_Bs_YwkD_like"/>
    <property type="match status" value="1"/>
</dbReference>
<dbReference type="Gene3D" id="3.10.180.10">
    <property type="entry name" value="2,3-Dihydroxybiphenyl 1,2-Dioxygenase, domain 1"/>
    <property type="match status" value="1"/>
</dbReference>
<dbReference type="InterPro" id="IPR051332">
    <property type="entry name" value="Fosfomycin_Res_Enzymes"/>
</dbReference>
<dbReference type="InterPro" id="IPR029068">
    <property type="entry name" value="Glyas_Bleomycin-R_OHBP_Dase"/>
</dbReference>
<dbReference type="InterPro" id="IPR004360">
    <property type="entry name" value="Glyas_Fos-R_dOase_dom"/>
</dbReference>
<dbReference type="InterPro" id="IPR037523">
    <property type="entry name" value="VOC"/>
</dbReference>
<dbReference type="InterPro" id="IPR037478">
    <property type="entry name" value="YwkD-like_dom"/>
</dbReference>
<dbReference type="NCBIfam" id="NF008551">
    <property type="entry name" value="PRK11478.1"/>
    <property type="match status" value="1"/>
</dbReference>
<dbReference type="PANTHER" id="PTHR36113:SF6">
    <property type="entry name" value="FOSFOMYCIN RESISTANCE PROTEIN FOSX"/>
    <property type="match status" value="1"/>
</dbReference>
<dbReference type="PANTHER" id="PTHR36113">
    <property type="entry name" value="LYASE, PUTATIVE-RELATED-RELATED"/>
    <property type="match status" value="1"/>
</dbReference>
<dbReference type="Pfam" id="PF00903">
    <property type="entry name" value="Glyoxalase"/>
    <property type="match status" value="1"/>
</dbReference>
<dbReference type="SUPFAM" id="SSF54593">
    <property type="entry name" value="Glyoxalase/Bleomycin resistance protein/Dihydroxybiphenyl dioxygenase"/>
    <property type="match status" value="1"/>
</dbReference>
<dbReference type="PROSITE" id="PS51819">
    <property type="entry name" value="VOC"/>
    <property type="match status" value="1"/>
</dbReference>
<sequence>MLGLKQVHHIAIIATDYAVSKAFYCDILGFTLQSEVYREARDSWKGDLALNGQYVIELFSFPFPPERPSRPEACGLRHLAFSVDDIDAAVAHLESHNVKCETIRVDPYTQKRFTFFNDPDGLPLELYEQ</sequence>
<protein>
    <recommendedName>
        <fullName>Uncharacterized protein YaeR</fullName>
    </recommendedName>
</protein>
<comment type="similarity">
    <text evidence="2">To B.subtilis YwkD.</text>
</comment>
<evidence type="ECO:0000255" key="1">
    <source>
        <dbReference type="PROSITE-ProRule" id="PRU01163"/>
    </source>
</evidence>
<evidence type="ECO:0000305" key="2"/>
<reference key="1">
    <citation type="submission" date="1995-12" db="EMBL/GenBank/DDBJ databases">
        <authorList>
            <person name="Yamamoto Y."/>
            <person name="Miwa Y."/>
            <person name="Ohmori H."/>
        </authorList>
    </citation>
    <scope>NUCLEOTIDE SEQUENCE [GENOMIC DNA]</scope>
    <source>
        <strain>K12 / W3110 / ATCC 27325 / DSM 5911</strain>
    </source>
</reference>
<reference key="2">
    <citation type="journal article" date="1998" name="Mol. Microbiol.">
        <title>An Escherichia coli gene (yaeO) suppresses temperature-sensitive mutations in essential genes by modulating Rho-dependent transcription termination.</title>
        <authorList>
            <person name="Pichoff S."/>
            <person name="Alibaud L."/>
            <person name="Guedant A."/>
            <person name="Castanie M.-P."/>
            <person name="Bouche J.-P."/>
        </authorList>
    </citation>
    <scope>NUCLEOTIDE SEQUENCE [GENOMIC DNA]</scope>
    <source>
        <strain>K12</strain>
    </source>
</reference>
<reference key="3">
    <citation type="submission" date="1996-02" db="EMBL/GenBank/DDBJ databases">
        <title>Systematic sequencing of the Escherichia coli genome: analysis of the 4.0 - 6.0 min (189,987 - 281,416bp) region.</title>
        <authorList>
            <person name="Takemoto K."/>
            <person name="Mori H."/>
            <person name="Murayama N."/>
            <person name="Kataoka K."/>
            <person name="Yano M."/>
            <person name="Itoh T."/>
            <person name="Yamamoto Y."/>
            <person name="Inokuchi H."/>
            <person name="Miki T."/>
            <person name="Hatada E."/>
            <person name="Fukuda R."/>
            <person name="Ichihara S."/>
            <person name="Mizuno T."/>
            <person name="Makino K."/>
            <person name="Nakata A."/>
            <person name="Yura T."/>
            <person name="Sampei G."/>
            <person name="Mizobuchi K."/>
        </authorList>
    </citation>
    <scope>NUCLEOTIDE SEQUENCE [LARGE SCALE GENOMIC DNA]</scope>
    <source>
        <strain>K12 / W3110 / ATCC 27325 / DSM 5911</strain>
    </source>
</reference>
<reference key="4">
    <citation type="submission" date="1997-01" db="EMBL/GenBank/DDBJ databases">
        <title>Sequence of minutes 4-25 of Escherichia coli.</title>
        <authorList>
            <person name="Chung E."/>
            <person name="Allen E."/>
            <person name="Araujo R."/>
            <person name="Aparicio A.M."/>
            <person name="Davis K."/>
            <person name="Duncan M."/>
            <person name="Federspiel N."/>
            <person name="Hyman R."/>
            <person name="Kalman S."/>
            <person name="Komp C."/>
            <person name="Kurdi O."/>
            <person name="Lew H."/>
            <person name="Lin D."/>
            <person name="Namath A."/>
            <person name="Oefner P."/>
            <person name="Roberts D."/>
            <person name="Schramm S."/>
            <person name="Davis R.W."/>
        </authorList>
    </citation>
    <scope>NUCLEOTIDE SEQUENCE [LARGE SCALE GENOMIC DNA]</scope>
    <source>
        <strain>K12 / MG1655 / ATCC 47076</strain>
    </source>
</reference>
<reference key="5">
    <citation type="journal article" date="1997" name="Science">
        <title>The complete genome sequence of Escherichia coli K-12.</title>
        <authorList>
            <person name="Blattner F.R."/>
            <person name="Plunkett G. III"/>
            <person name="Bloch C.A."/>
            <person name="Perna N.T."/>
            <person name="Burland V."/>
            <person name="Riley M."/>
            <person name="Collado-Vides J."/>
            <person name="Glasner J.D."/>
            <person name="Rode C.K."/>
            <person name="Mayhew G.F."/>
            <person name="Gregor J."/>
            <person name="Davis N.W."/>
            <person name="Kirkpatrick H.A."/>
            <person name="Goeden M.A."/>
            <person name="Rose D.J."/>
            <person name="Mau B."/>
            <person name="Shao Y."/>
        </authorList>
    </citation>
    <scope>NUCLEOTIDE SEQUENCE [LARGE SCALE GENOMIC DNA]</scope>
    <source>
        <strain>K12 / MG1655 / ATCC 47076</strain>
    </source>
</reference>
<reference key="6">
    <citation type="journal article" date="2006" name="Mol. Syst. Biol.">
        <title>Highly accurate genome sequences of Escherichia coli K-12 strains MG1655 and W3110.</title>
        <authorList>
            <person name="Hayashi K."/>
            <person name="Morooka N."/>
            <person name="Yamamoto Y."/>
            <person name="Fujita K."/>
            <person name="Isono K."/>
            <person name="Choi S."/>
            <person name="Ohtsubo E."/>
            <person name="Baba T."/>
            <person name="Wanner B.L."/>
            <person name="Mori H."/>
            <person name="Horiuchi T."/>
        </authorList>
    </citation>
    <scope>NUCLEOTIDE SEQUENCE [LARGE SCALE GENOMIC DNA]</scope>
    <source>
        <strain>K12 / W3110 / ATCC 27325 / DSM 5911</strain>
    </source>
</reference>
<keyword id="KW-0479">Metal-binding</keyword>
<keyword id="KW-1185">Reference proteome</keyword>
<accession>P52096</accession>
<accession>P75669</accession>
<name>YAER_ECOLI</name>
<feature type="chain" id="PRO_0000168532" description="Uncharacterized protein YaeR">
    <location>
        <begin position="1"/>
        <end position="129"/>
    </location>
</feature>
<feature type="domain" description="VOC" evidence="1">
    <location>
        <begin position="6"/>
        <end position="129"/>
    </location>
</feature>
<feature type="binding site" evidence="1">
    <location>
        <position position="9"/>
    </location>
    <ligand>
        <name>a divalent metal cation</name>
        <dbReference type="ChEBI" id="CHEBI:60240"/>
    </ligand>
</feature>
<feature type="binding site" evidence="1">
    <location>
        <position position="57"/>
    </location>
    <ligand>
        <name>a divalent metal cation</name>
        <dbReference type="ChEBI" id="CHEBI:60240"/>
    </ligand>
</feature>
<feature type="binding site" evidence="1">
    <location>
        <position position="78"/>
    </location>
    <ligand>
        <name>a divalent metal cation</name>
        <dbReference type="ChEBI" id="CHEBI:60240"/>
    </ligand>
</feature>
<feature type="binding site" evidence="1">
    <location>
        <position position="125"/>
    </location>
    <ligand>
        <name>a divalent metal cation</name>
        <dbReference type="ChEBI" id="CHEBI:60240"/>
    </ligand>
</feature>